<feature type="chain" id="PRO_0000122265" description="Small ribosomal subunit protein eS8">
    <location>
        <begin position="1"/>
        <end position="124"/>
    </location>
</feature>
<feature type="region of interest" description="Disordered" evidence="2">
    <location>
        <begin position="1"/>
        <end position="40"/>
    </location>
</feature>
<feature type="region of interest" description="Disordered" evidence="2">
    <location>
        <begin position="102"/>
        <end position="124"/>
    </location>
</feature>
<feature type="compositionally biased region" description="Basic residues" evidence="2">
    <location>
        <begin position="1"/>
        <end position="22"/>
    </location>
</feature>
<feature type="compositionally biased region" description="Basic and acidic residues" evidence="2">
    <location>
        <begin position="23"/>
        <end position="32"/>
    </location>
</feature>
<feature type="compositionally biased region" description="Polar residues" evidence="2">
    <location>
        <begin position="106"/>
        <end position="124"/>
    </location>
</feature>
<reference key="1">
    <citation type="journal article" date="2000" name="Proc. Natl. Acad. Sci. U.S.A.">
        <title>Genome sequence of Halobacterium species NRC-1.</title>
        <authorList>
            <person name="Ng W.V."/>
            <person name="Kennedy S.P."/>
            <person name="Mahairas G.G."/>
            <person name="Berquist B."/>
            <person name="Pan M."/>
            <person name="Shukla H.D."/>
            <person name="Lasky S.R."/>
            <person name="Baliga N.S."/>
            <person name="Thorsson V."/>
            <person name="Sbrogna J."/>
            <person name="Swartzell S."/>
            <person name="Weir D."/>
            <person name="Hall J."/>
            <person name="Dahl T.A."/>
            <person name="Welti R."/>
            <person name="Goo Y.A."/>
            <person name="Leithauser B."/>
            <person name="Keller K."/>
            <person name="Cruz R."/>
            <person name="Danson M.J."/>
            <person name="Hough D.W."/>
            <person name="Maddocks D.G."/>
            <person name="Jablonski P.E."/>
            <person name="Krebs M.P."/>
            <person name="Angevine C.M."/>
            <person name="Dale H."/>
            <person name="Isenbarger T.A."/>
            <person name="Peck R.F."/>
            <person name="Pohlschroder M."/>
            <person name="Spudich J.L."/>
            <person name="Jung K.-H."/>
            <person name="Alam M."/>
            <person name="Freitas T."/>
            <person name="Hou S."/>
            <person name="Daniels C.J."/>
            <person name="Dennis P.P."/>
            <person name="Omer A.D."/>
            <person name="Ebhardt H."/>
            <person name="Lowe T.M."/>
            <person name="Liang P."/>
            <person name="Riley M."/>
            <person name="Hood L."/>
            <person name="DasSarma S."/>
        </authorList>
    </citation>
    <scope>NUCLEOTIDE SEQUENCE [LARGE SCALE GENOMIC DNA]</scope>
    <source>
        <strain>ATCC 700922 / JCM 11081 / NRC-1</strain>
    </source>
</reference>
<dbReference type="EMBL" id="AE004437">
    <property type="protein sequence ID" value="AAG19920.1"/>
    <property type="molecule type" value="Genomic_DNA"/>
</dbReference>
<dbReference type="PIR" id="D84319">
    <property type="entry name" value="D84319"/>
</dbReference>
<dbReference type="RefSeq" id="WP_010903217.1">
    <property type="nucleotide sequence ID" value="NC_002607.1"/>
</dbReference>
<dbReference type="SMR" id="Q9HPE9"/>
<dbReference type="FunCoup" id="Q9HPE9">
    <property type="interactions" value="106"/>
</dbReference>
<dbReference type="STRING" id="64091.VNG_1668G"/>
<dbReference type="PaxDb" id="64091-VNG_1668G"/>
<dbReference type="KEGG" id="hal:VNG_1668G"/>
<dbReference type="PATRIC" id="fig|64091.14.peg.1271"/>
<dbReference type="HOGENOM" id="CLU_080597_2_1_2"/>
<dbReference type="InParanoid" id="Q9HPE9"/>
<dbReference type="OrthoDB" id="372305at2157"/>
<dbReference type="PhylomeDB" id="Q9HPE9"/>
<dbReference type="Proteomes" id="UP000000554">
    <property type="component" value="Chromosome"/>
</dbReference>
<dbReference type="GO" id="GO:0022627">
    <property type="term" value="C:cytosolic small ribosomal subunit"/>
    <property type="evidence" value="ECO:0000318"/>
    <property type="project" value="GO_Central"/>
</dbReference>
<dbReference type="GO" id="GO:0003735">
    <property type="term" value="F:structural constituent of ribosome"/>
    <property type="evidence" value="ECO:0000318"/>
    <property type="project" value="GO_Central"/>
</dbReference>
<dbReference type="GO" id="GO:0000462">
    <property type="term" value="P:maturation of SSU-rRNA from tricistronic rRNA transcript (SSU-rRNA, 5.8S rRNA, LSU-rRNA)"/>
    <property type="evidence" value="ECO:0000318"/>
    <property type="project" value="GO_Central"/>
</dbReference>
<dbReference type="GO" id="GO:0006412">
    <property type="term" value="P:translation"/>
    <property type="evidence" value="ECO:0007669"/>
    <property type="project" value="UniProtKB-UniRule"/>
</dbReference>
<dbReference type="CDD" id="cd11382">
    <property type="entry name" value="Ribosomal_S8e"/>
    <property type="match status" value="1"/>
</dbReference>
<dbReference type="Gene3D" id="2.40.10.310">
    <property type="match status" value="1"/>
</dbReference>
<dbReference type="HAMAP" id="MF_00029">
    <property type="entry name" value="Ribosomal_eS8"/>
    <property type="match status" value="1"/>
</dbReference>
<dbReference type="InterPro" id="IPR001047">
    <property type="entry name" value="Ribosomal_eS8"/>
</dbReference>
<dbReference type="InterPro" id="IPR018283">
    <property type="entry name" value="Ribosomal_eS8_CS"/>
</dbReference>
<dbReference type="InterPro" id="IPR020919">
    <property type="entry name" value="Ribosomal_protein_eS8_arc"/>
</dbReference>
<dbReference type="InterPro" id="IPR022309">
    <property type="entry name" value="Ribosomal_Se8/biogenesis_NSA2"/>
</dbReference>
<dbReference type="NCBIfam" id="TIGR00307">
    <property type="entry name" value="eS8"/>
    <property type="match status" value="1"/>
</dbReference>
<dbReference type="PANTHER" id="PTHR10394">
    <property type="entry name" value="40S RIBOSOMAL PROTEIN S8"/>
    <property type="match status" value="1"/>
</dbReference>
<dbReference type="Pfam" id="PF01201">
    <property type="entry name" value="Ribosomal_S8e"/>
    <property type="match status" value="1"/>
</dbReference>
<dbReference type="PROSITE" id="PS01193">
    <property type="entry name" value="RIBOSOMAL_S8E"/>
    <property type="match status" value="1"/>
</dbReference>
<accession>Q9HPE9</accession>
<organism>
    <name type="scientific">Halobacterium salinarum (strain ATCC 700922 / JCM 11081 / NRC-1)</name>
    <name type="common">Halobacterium halobium</name>
    <dbReference type="NCBI Taxonomy" id="64091"/>
    <lineage>
        <taxon>Archaea</taxon>
        <taxon>Methanobacteriati</taxon>
        <taxon>Methanobacteriota</taxon>
        <taxon>Stenosarchaea group</taxon>
        <taxon>Halobacteria</taxon>
        <taxon>Halobacteriales</taxon>
        <taxon>Halobacteriaceae</taxon>
        <taxon>Halobacterium</taxon>
        <taxon>Halobacterium salinarum NRC-34001</taxon>
    </lineage>
</organism>
<sequence>MQYQGRSKRSKTGARLRPRSKKSKSELGREPTETTVGEPRFRTVDVRGDAEKVRVLSTNVVNVATDSGAERATIEDVSANDANPNYARRNIITKGAIIETDAGTARVTSRPGQDGQVNATRVDE</sequence>
<gene>
    <name type="primary">rps8e</name>
    <name type="ordered locus">VNG_1668G</name>
</gene>
<keyword id="KW-1185">Reference proteome</keyword>
<keyword id="KW-0687">Ribonucleoprotein</keyword>
<keyword id="KW-0689">Ribosomal protein</keyword>
<evidence type="ECO:0000250" key="1"/>
<evidence type="ECO:0000256" key="2">
    <source>
        <dbReference type="SAM" id="MobiDB-lite"/>
    </source>
</evidence>
<evidence type="ECO:0000305" key="3"/>
<name>RS8E_HALSA</name>
<protein>
    <recommendedName>
        <fullName evidence="3">Small ribosomal subunit protein eS8</fullName>
    </recommendedName>
    <alternativeName>
        <fullName>30S ribosomal protein S8e</fullName>
    </alternativeName>
</protein>
<proteinExistence type="inferred from homology"/>
<comment type="subunit">
    <text evidence="1">Part of the 30S ribosomal subunit.</text>
</comment>
<comment type="similarity">
    <text evidence="3">Belongs to the eukaryotic ribosomal protein eS8 family.</text>
</comment>